<sequence length="438" mass="50170">MEYFKNVPKVQYEGPKSNNPYAFKFYNPDEIIDGKPLKEHLRFAVAYWHTFTGTGTDPFGASTMQRPWDRFSDPMDIAKARVEAAFEFFEKLDVPFFCFHDRDIAPEGDNLRETNKNLGTIVAMIKDYLKTSKAKVLWGTANLFSHPRYVHGAATSCNADVFAYAAAQVKKALEITKELGGQNYVFWGGREGYETLLNTDTELELDNLARFLHMAVEYAKEIGFEGQLLIEPKPKEPTKHQYDFDAAHVYAFLKKYGLDKYFKLNIEVNHATLAGHEFQHELRYARINNILGSIDANMRDMLLGWDTDQFPTDIRMTTLAMYEVIKMGGFDKGGLNFDAKVRRASFEPEDLFIAHIAGMDAFAKGFKVAYRLVKDGVFDKFIEERYKSYKEGIGAEIVSGRANFKTLEEYALNNPKIENKSGKQELLESILNQYLFTE</sequence>
<keyword id="KW-0119">Carbohydrate metabolism</keyword>
<keyword id="KW-0963">Cytoplasm</keyword>
<keyword id="KW-0413">Isomerase</keyword>
<keyword id="KW-0460">Magnesium</keyword>
<keyword id="KW-0479">Metal-binding</keyword>
<keyword id="KW-0859">Xylose metabolism</keyword>
<name>XYLA_CALSX</name>
<organism>
    <name type="scientific">Caldanaerobacter subterraneus subsp. yonseiensis</name>
    <name type="common">Thermoanaerobacter yonseiensis</name>
    <dbReference type="NCBI Taxonomy" id="111519"/>
    <lineage>
        <taxon>Bacteria</taxon>
        <taxon>Bacillati</taxon>
        <taxon>Bacillota</taxon>
        <taxon>Clostridia</taxon>
        <taxon>Thermoanaerobacterales</taxon>
        <taxon>Thermoanaerobacteraceae</taxon>
        <taxon>Caldanaerobacter</taxon>
    </lineage>
</organism>
<accession>Q9KGU2</accession>
<protein>
    <recommendedName>
        <fullName evidence="1">Xylose isomerase</fullName>
        <ecNumber evidence="1">5.3.1.5</ecNumber>
    </recommendedName>
</protein>
<reference key="1">
    <citation type="submission" date="2000-06" db="EMBL/GenBank/DDBJ databases">
        <title>Cloning, sequencing, and expression of xylose/glucose isomerase from Thermoanaerobacter yonseii sp. nov.</title>
        <authorList>
            <person name="Kim B.-C."/>
            <person name="Jang H.-J."/>
            <person name="Lee D.-W."/>
            <person name="Lee H.-S."/>
            <person name="Kim Y.-S."/>
            <person name="Pyun Y.-R."/>
        </authorList>
    </citation>
    <scope>NUCLEOTIDE SEQUENCE [GENOMIC DNA]</scope>
</reference>
<dbReference type="EC" id="5.3.1.5" evidence="1"/>
<dbReference type="EMBL" id="AF282944">
    <property type="protein sequence ID" value="AAF87247.1"/>
    <property type="molecule type" value="Genomic_DNA"/>
</dbReference>
<dbReference type="SMR" id="Q9KGU2"/>
<dbReference type="GO" id="GO:0005737">
    <property type="term" value="C:cytoplasm"/>
    <property type="evidence" value="ECO:0007669"/>
    <property type="project" value="UniProtKB-SubCell"/>
</dbReference>
<dbReference type="GO" id="GO:0000287">
    <property type="term" value="F:magnesium ion binding"/>
    <property type="evidence" value="ECO:0007669"/>
    <property type="project" value="UniProtKB-UniRule"/>
</dbReference>
<dbReference type="GO" id="GO:0009045">
    <property type="term" value="F:xylose isomerase activity"/>
    <property type="evidence" value="ECO:0007669"/>
    <property type="project" value="UniProtKB-UniRule"/>
</dbReference>
<dbReference type="GO" id="GO:0042732">
    <property type="term" value="P:D-xylose metabolic process"/>
    <property type="evidence" value="ECO:0007669"/>
    <property type="project" value="UniProtKB-UniRule"/>
</dbReference>
<dbReference type="FunFam" id="3.20.20.150:FF:000002">
    <property type="entry name" value="Xylose isomerase"/>
    <property type="match status" value="1"/>
</dbReference>
<dbReference type="Gene3D" id="3.20.20.150">
    <property type="entry name" value="Divalent-metal-dependent TIM barrel enzymes"/>
    <property type="match status" value="1"/>
</dbReference>
<dbReference type="HAMAP" id="MF_00455">
    <property type="entry name" value="Xylose_isom_A"/>
    <property type="match status" value="1"/>
</dbReference>
<dbReference type="InterPro" id="IPR036237">
    <property type="entry name" value="Xyl_isomerase-like_sf"/>
</dbReference>
<dbReference type="InterPro" id="IPR013022">
    <property type="entry name" value="Xyl_isomerase-like_TIM-brl"/>
</dbReference>
<dbReference type="InterPro" id="IPR013452">
    <property type="entry name" value="Xylose_isom_bac"/>
</dbReference>
<dbReference type="InterPro" id="IPR001998">
    <property type="entry name" value="Xylose_isomerase"/>
</dbReference>
<dbReference type="NCBIfam" id="NF003998">
    <property type="entry name" value="PRK05474.1"/>
    <property type="match status" value="1"/>
</dbReference>
<dbReference type="NCBIfam" id="TIGR02630">
    <property type="entry name" value="xylose_isom_A"/>
    <property type="match status" value="1"/>
</dbReference>
<dbReference type="PANTHER" id="PTHR48408">
    <property type="match status" value="1"/>
</dbReference>
<dbReference type="PANTHER" id="PTHR48408:SF1">
    <property type="entry name" value="XYLOSE ISOMERASE"/>
    <property type="match status" value="1"/>
</dbReference>
<dbReference type="Pfam" id="PF01261">
    <property type="entry name" value="AP_endonuc_2"/>
    <property type="match status" value="1"/>
</dbReference>
<dbReference type="PRINTS" id="PR00688">
    <property type="entry name" value="XYLOSISMRASE"/>
</dbReference>
<dbReference type="SUPFAM" id="SSF51658">
    <property type="entry name" value="Xylose isomerase-like"/>
    <property type="match status" value="1"/>
</dbReference>
<dbReference type="PROSITE" id="PS51415">
    <property type="entry name" value="XYLOSE_ISOMERASE"/>
    <property type="match status" value="1"/>
</dbReference>
<comment type="catalytic activity">
    <reaction evidence="1">
        <text>alpha-D-xylose = alpha-D-xylulofuranose</text>
        <dbReference type="Rhea" id="RHEA:22816"/>
        <dbReference type="ChEBI" id="CHEBI:28518"/>
        <dbReference type="ChEBI" id="CHEBI:188998"/>
        <dbReference type="EC" id="5.3.1.5"/>
    </reaction>
</comment>
<comment type="cofactor">
    <cofactor evidence="1">
        <name>Mg(2+)</name>
        <dbReference type="ChEBI" id="CHEBI:18420"/>
    </cofactor>
    <text evidence="1">Binds 2 magnesium ions per subunit.</text>
</comment>
<comment type="subunit">
    <text evidence="1">Homotetramer.</text>
</comment>
<comment type="subcellular location">
    <subcellularLocation>
        <location evidence="1">Cytoplasm</location>
    </subcellularLocation>
</comment>
<comment type="similarity">
    <text evidence="1">Belongs to the xylose isomerase family.</text>
</comment>
<evidence type="ECO:0000255" key="1">
    <source>
        <dbReference type="HAMAP-Rule" id="MF_00455"/>
    </source>
</evidence>
<gene>
    <name evidence="1" type="primary">xylA</name>
</gene>
<feature type="chain" id="PRO_0000195818" description="Xylose isomerase">
    <location>
        <begin position="1"/>
        <end position="438"/>
    </location>
</feature>
<feature type="active site" evidence="1">
    <location>
        <position position="100"/>
    </location>
</feature>
<feature type="active site" evidence="1">
    <location>
        <position position="103"/>
    </location>
</feature>
<feature type="binding site" evidence="1">
    <location>
        <position position="231"/>
    </location>
    <ligand>
        <name>Mg(2+)</name>
        <dbReference type="ChEBI" id="CHEBI:18420"/>
        <label>1</label>
    </ligand>
</feature>
<feature type="binding site" evidence="1">
    <location>
        <position position="267"/>
    </location>
    <ligand>
        <name>Mg(2+)</name>
        <dbReference type="ChEBI" id="CHEBI:18420"/>
        <label>1</label>
    </ligand>
</feature>
<feature type="binding site" evidence="1">
    <location>
        <position position="267"/>
    </location>
    <ligand>
        <name>Mg(2+)</name>
        <dbReference type="ChEBI" id="CHEBI:18420"/>
        <label>2</label>
    </ligand>
</feature>
<feature type="binding site" evidence="1">
    <location>
        <position position="270"/>
    </location>
    <ligand>
        <name>Mg(2+)</name>
        <dbReference type="ChEBI" id="CHEBI:18420"/>
        <label>2</label>
    </ligand>
</feature>
<feature type="binding site" evidence="1">
    <location>
        <position position="295"/>
    </location>
    <ligand>
        <name>Mg(2+)</name>
        <dbReference type="ChEBI" id="CHEBI:18420"/>
        <label>1</label>
    </ligand>
</feature>
<feature type="binding site" evidence="1">
    <location>
        <position position="306"/>
    </location>
    <ligand>
        <name>Mg(2+)</name>
        <dbReference type="ChEBI" id="CHEBI:18420"/>
        <label>2</label>
    </ligand>
</feature>
<feature type="binding site" evidence="1">
    <location>
        <position position="308"/>
    </location>
    <ligand>
        <name>Mg(2+)</name>
        <dbReference type="ChEBI" id="CHEBI:18420"/>
        <label>2</label>
    </ligand>
</feature>
<feature type="binding site" evidence="1">
    <location>
        <position position="338"/>
    </location>
    <ligand>
        <name>Mg(2+)</name>
        <dbReference type="ChEBI" id="CHEBI:18420"/>
        <label>1</label>
    </ligand>
</feature>
<proteinExistence type="inferred from homology"/>